<gene>
    <name evidence="1" type="primary">nadD</name>
    <name type="ordered locus">TM1040_2258</name>
</gene>
<feature type="chain" id="PRO_0000310149" description="Probable nicotinate-nucleotide adenylyltransferase">
    <location>
        <begin position="1"/>
        <end position="189"/>
    </location>
</feature>
<name>NADD_RUEST</name>
<comment type="function">
    <text evidence="1">Catalyzes the reversible adenylation of nicotinate mononucleotide (NaMN) to nicotinic acid adenine dinucleotide (NaAD).</text>
</comment>
<comment type="catalytic activity">
    <reaction evidence="1">
        <text>nicotinate beta-D-ribonucleotide + ATP + H(+) = deamido-NAD(+) + diphosphate</text>
        <dbReference type="Rhea" id="RHEA:22860"/>
        <dbReference type="ChEBI" id="CHEBI:15378"/>
        <dbReference type="ChEBI" id="CHEBI:30616"/>
        <dbReference type="ChEBI" id="CHEBI:33019"/>
        <dbReference type="ChEBI" id="CHEBI:57502"/>
        <dbReference type="ChEBI" id="CHEBI:58437"/>
        <dbReference type="EC" id="2.7.7.18"/>
    </reaction>
</comment>
<comment type="pathway">
    <text evidence="1">Cofactor biosynthesis; NAD(+) biosynthesis; deamido-NAD(+) from nicotinate D-ribonucleotide: step 1/1.</text>
</comment>
<comment type="similarity">
    <text evidence="1">Belongs to the NadD family.</text>
</comment>
<comment type="sequence caution" evidence="2">
    <conflict type="erroneous initiation">
        <sequence resource="EMBL-CDS" id="ABF64990"/>
    </conflict>
</comment>
<sequence length="189" mass="21549">MTVGLLGGSFDPPHEGHVQISRAALKRFDLDQLWWLVTPGNPLKENPPASMTRRIKAAREIMDHPRVRISDIEARLNTRYTAQTLRELRKLYPQVRFVWLMGADNLAHFHRWKNWRGIMESVPVGVLARPGDRISARLSRAARIYSQHRIPAGQSHLLARASSPAWCFLNVPMTKASSTEIRKRGAWTG</sequence>
<accession>Q1GEC6</accession>
<dbReference type="EC" id="2.7.7.18" evidence="1"/>
<dbReference type="EMBL" id="CP000377">
    <property type="protein sequence ID" value="ABF64990.1"/>
    <property type="status" value="ALT_INIT"/>
    <property type="molecule type" value="Genomic_DNA"/>
</dbReference>
<dbReference type="RefSeq" id="WP_011539579.1">
    <property type="nucleotide sequence ID" value="NC_008044.1"/>
</dbReference>
<dbReference type="SMR" id="Q1GEC6"/>
<dbReference type="STRING" id="292414.TM1040_2258"/>
<dbReference type="KEGG" id="sit:TM1040_2258"/>
<dbReference type="eggNOG" id="COG1057">
    <property type="taxonomic scope" value="Bacteria"/>
</dbReference>
<dbReference type="HOGENOM" id="CLU_069765_2_0_5"/>
<dbReference type="OrthoDB" id="5295945at2"/>
<dbReference type="UniPathway" id="UPA00253">
    <property type="reaction ID" value="UER00332"/>
</dbReference>
<dbReference type="Proteomes" id="UP000000636">
    <property type="component" value="Chromosome"/>
</dbReference>
<dbReference type="GO" id="GO:0005524">
    <property type="term" value="F:ATP binding"/>
    <property type="evidence" value="ECO:0007669"/>
    <property type="project" value="UniProtKB-KW"/>
</dbReference>
<dbReference type="GO" id="GO:0004515">
    <property type="term" value="F:nicotinate-nucleotide adenylyltransferase activity"/>
    <property type="evidence" value="ECO:0007669"/>
    <property type="project" value="UniProtKB-UniRule"/>
</dbReference>
<dbReference type="GO" id="GO:0009435">
    <property type="term" value="P:NAD biosynthetic process"/>
    <property type="evidence" value="ECO:0007669"/>
    <property type="project" value="UniProtKB-UniRule"/>
</dbReference>
<dbReference type="CDD" id="cd02165">
    <property type="entry name" value="NMNAT"/>
    <property type="match status" value="1"/>
</dbReference>
<dbReference type="Gene3D" id="3.40.50.620">
    <property type="entry name" value="HUPs"/>
    <property type="match status" value="1"/>
</dbReference>
<dbReference type="HAMAP" id="MF_00244">
    <property type="entry name" value="NaMN_adenylyltr"/>
    <property type="match status" value="1"/>
</dbReference>
<dbReference type="InterPro" id="IPR004821">
    <property type="entry name" value="Cyt_trans-like"/>
</dbReference>
<dbReference type="InterPro" id="IPR005248">
    <property type="entry name" value="NadD/NMNAT"/>
</dbReference>
<dbReference type="InterPro" id="IPR014729">
    <property type="entry name" value="Rossmann-like_a/b/a_fold"/>
</dbReference>
<dbReference type="NCBIfam" id="TIGR00125">
    <property type="entry name" value="cyt_tran_rel"/>
    <property type="match status" value="1"/>
</dbReference>
<dbReference type="NCBIfam" id="TIGR00482">
    <property type="entry name" value="nicotinate (nicotinamide) nucleotide adenylyltransferase"/>
    <property type="match status" value="1"/>
</dbReference>
<dbReference type="NCBIfam" id="NF000843">
    <property type="entry name" value="PRK00071.2-2"/>
    <property type="match status" value="1"/>
</dbReference>
<dbReference type="NCBIfam" id="NF000845">
    <property type="entry name" value="PRK00071.2-4"/>
    <property type="match status" value="1"/>
</dbReference>
<dbReference type="PANTHER" id="PTHR39321">
    <property type="entry name" value="NICOTINATE-NUCLEOTIDE ADENYLYLTRANSFERASE-RELATED"/>
    <property type="match status" value="1"/>
</dbReference>
<dbReference type="PANTHER" id="PTHR39321:SF3">
    <property type="entry name" value="PHOSPHOPANTETHEINE ADENYLYLTRANSFERASE"/>
    <property type="match status" value="1"/>
</dbReference>
<dbReference type="Pfam" id="PF01467">
    <property type="entry name" value="CTP_transf_like"/>
    <property type="match status" value="1"/>
</dbReference>
<dbReference type="SUPFAM" id="SSF52374">
    <property type="entry name" value="Nucleotidylyl transferase"/>
    <property type="match status" value="1"/>
</dbReference>
<reference key="1">
    <citation type="submission" date="2006-05" db="EMBL/GenBank/DDBJ databases">
        <title>Complete sequence of chromosome of Silicibacter sp. TM1040.</title>
        <authorList>
            <consortium name="US DOE Joint Genome Institute"/>
            <person name="Copeland A."/>
            <person name="Lucas S."/>
            <person name="Lapidus A."/>
            <person name="Barry K."/>
            <person name="Detter J.C."/>
            <person name="Glavina del Rio T."/>
            <person name="Hammon N."/>
            <person name="Israni S."/>
            <person name="Dalin E."/>
            <person name="Tice H."/>
            <person name="Pitluck S."/>
            <person name="Brettin T."/>
            <person name="Bruce D."/>
            <person name="Han C."/>
            <person name="Tapia R."/>
            <person name="Goodwin L."/>
            <person name="Thompson L.S."/>
            <person name="Gilna P."/>
            <person name="Schmutz J."/>
            <person name="Larimer F."/>
            <person name="Land M."/>
            <person name="Hauser L."/>
            <person name="Kyrpides N."/>
            <person name="Kim E."/>
            <person name="Belas R."/>
            <person name="Moran M.A."/>
            <person name="Buchan A."/>
            <person name="Gonzalez J.M."/>
            <person name="Schell M.A."/>
            <person name="Sun F."/>
            <person name="Richardson P."/>
        </authorList>
    </citation>
    <scope>NUCLEOTIDE SEQUENCE [LARGE SCALE GENOMIC DNA]</scope>
    <source>
        <strain>TM1040</strain>
    </source>
</reference>
<organism>
    <name type="scientific">Ruegeria sp. (strain TM1040)</name>
    <name type="common">Silicibacter sp.</name>
    <dbReference type="NCBI Taxonomy" id="292414"/>
    <lineage>
        <taxon>Bacteria</taxon>
        <taxon>Pseudomonadati</taxon>
        <taxon>Pseudomonadota</taxon>
        <taxon>Alphaproteobacteria</taxon>
        <taxon>Rhodobacterales</taxon>
        <taxon>Roseobacteraceae</taxon>
        <taxon>Ruegeria</taxon>
    </lineage>
</organism>
<keyword id="KW-0067">ATP-binding</keyword>
<keyword id="KW-0520">NAD</keyword>
<keyword id="KW-0547">Nucleotide-binding</keyword>
<keyword id="KW-0548">Nucleotidyltransferase</keyword>
<keyword id="KW-0662">Pyridine nucleotide biosynthesis</keyword>
<keyword id="KW-1185">Reference proteome</keyword>
<keyword id="KW-0808">Transferase</keyword>
<protein>
    <recommendedName>
        <fullName evidence="1">Probable nicotinate-nucleotide adenylyltransferase</fullName>
        <ecNumber evidence="1">2.7.7.18</ecNumber>
    </recommendedName>
    <alternativeName>
        <fullName evidence="1">Deamido-NAD(+) diphosphorylase</fullName>
    </alternativeName>
    <alternativeName>
        <fullName evidence="1">Deamido-NAD(+) pyrophosphorylase</fullName>
    </alternativeName>
    <alternativeName>
        <fullName evidence="1">Nicotinate mononucleotide adenylyltransferase</fullName>
        <shortName evidence="1">NaMN adenylyltransferase</shortName>
    </alternativeName>
</protein>
<proteinExistence type="inferred from homology"/>
<evidence type="ECO:0000255" key="1">
    <source>
        <dbReference type="HAMAP-Rule" id="MF_00244"/>
    </source>
</evidence>
<evidence type="ECO:0000305" key="2"/>